<protein>
    <recommendedName>
        <fullName evidence="4">Carboxysome shell protein CsoS1C</fullName>
    </recommendedName>
</protein>
<gene>
    <name evidence="4" type="primary">csoS1C</name>
    <name type="ordered locus">Tcr_0846</name>
</gene>
<keyword id="KW-1283">Bacterial microcompartment</keyword>
<keyword id="KW-0120">Carbon dioxide fixation</keyword>
<keyword id="KW-1282">Carboxysome</keyword>
<comment type="function">
    <text evidence="1">One of shell proteins of the carboxysome, a polyhedral inclusion where RuBisCO (ribulose bisphosphate carboxylase, ccbL-ccbS) is sequestered. Assembles into hexamers which make sheets that form the facets of the polyhedral carboxysome. The shell probably limits the diffusion of CO(2) into and out of the carboxysome.</text>
</comment>
<comment type="subunit">
    <text evidence="1">Homohexamer with a small central pore.</text>
</comment>
<comment type="subcellular location">
    <subcellularLocation>
        <location evidence="6">Carboxysome</location>
    </subcellularLocation>
    <text evidence="5">This bacterium makes alpha-type carboxysomes.</text>
</comment>
<comment type="induction">
    <text evidence="3">Induced by growth in low levels of dissolved inorganic carbon (at protein level).</text>
</comment>
<comment type="domain">
    <text evidence="1">The tight homohexamer forms a small pore which is positively charged.</text>
</comment>
<comment type="similarity">
    <text evidence="5">Belongs to the bacterial microcompartments protein family. CsoS1 subfamily.</text>
</comment>
<sequence length="102" mass="10488">MSTEYGIALGMIETRGLVPAIEAADAMTKAAEVRLVSREFVGGGYVTVLVRGETGAVNAAVRAGADACERVGDGLVAAHIIARPHKEVEPVLALGNSSPDRS</sequence>
<feature type="chain" id="PRO_0000452074" description="Carboxysome shell protein CsoS1C">
    <location>
        <begin position="1"/>
        <end position="102"/>
    </location>
</feature>
<feature type="domain" description="BMC" evidence="2">
    <location>
        <begin position="8"/>
        <end position="93"/>
    </location>
</feature>
<organism>
    <name type="scientific">Hydrogenovibrio crunogenus (strain DSM 25203 / XCL-2)</name>
    <name type="common">Thiomicrospira crunogena</name>
    <dbReference type="NCBI Taxonomy" id="317025"/>
    <lineage>
        <taxon>Bacteria</taxon>
        <taxon>Pseudomonadati</taxon>
        <taxon>Pseudomonadota</taxon>
        <taxon>Gammaproteobacteria</taxon>
        <taxon>Thiotrichales</taxon>
        <taxon>Piscirickettsiaceae</taxon>
        <taxon>Hydrogenovibrio</taxon>
    </lineage>
</organism>
<reference key="1">
    <citation type="journal article" date="2006" name="PLoS Biol.">
        <title>The genome of deep-sea vent chemolithoautotroph Thiomicrospira crunogena XCL-2.</title>
        <authorList>
            <person name="Scott K.M."/>
            <person name="Sievert S.M."/>
            <person name="Abril F.N."/>
            <person name="Ball L.A."/>
            <person name="Barrett C.J."/>
            <person name="Blake R.A."/>
            <person name="Boller A.J."/>
            <person name="Chain P.S.G."/>
            <person name="Clark J.A."/>
            <person name="Davis C.R."/>
            <person name="Detter C."/>
            <person name="Do K.F."/>
            <person name="Dobrinski K.P."/>
            <person name="Faza B.I."/>
            <person name="Fitzpatrick K.A."/>
            <person name="Freyermuth S.K."/>
            <person name="Harmer T.L."/>
            <person name="Hauser L.J."/>
            <person name="Huegler M."/>
            <person name="Kerfeld C.A."/>
            <person name="Klotz M.G."/>
            <person name="Kong W.W."/>
            <person name="Land M."/>
            <person name="Lapidus A."/>
            <person name="Larimer F.W."/>
            <person name="Longo D.L."/>
            <person name="Lucas S."/>
            <person name="Malfatti S.A."/>
            <person name="Massey S.E."/>
            <person name="Martin D.D."/>
            <person name="McCuddin Z."/>
            <person name="Meyer F."/>
            <person name="Moore J.L."/>
            <person name="Ocampo L.H. Jr."/>
            <person name="Paul J.H."/>
            <person name="Paulsen I.T."/>
            <person name="Reep D.K."/>
            <person name="Ren Q."/>
            <person name="Ross R.L."/>
            <person name="Sato P.Y."/>
            <person name="Thomas P."/>
            <person name="Tinkham L.E."/>
            <person name="Zeruth G.T."/>
        </authorList>
    </citation>
    <scope>NUCLEOTIDE SEQUENCE [LARGE SCALE GENOMIC DNA]</scope>
    <source>
        <strain>DSM 25203 / XCL-2</strain>
    </source>
</reference>
<reference key="2">
    <citation type="journal article" date="2017" name="J. Bacteriol.">
        <title>Proteomic and Mutant Analysis of the CO2 Concentrating Mechanism of Hydrothermal Vent Chemolithoautotroph Thiomicrospira crunogena.</title>
        <authorList>
            <consortium name="USF MCB4404L"/>
            <person name="Mangiapia M."/>
            <person name="Brown T.W."/>
            <person name="Chaput D."/>
            <person name="Haller E."/>
            <person name="Harmer T.L."/>
            <person name="Hashemy Z."/>
            <person name="Keeley R."/>
            <person name="Leonard J."/>
            <person name="Mancera P."/>
            <person name="Nicholson D."/>
            <person name="Stevens S."/>
            <person name="Wanjugi P."/>
            <person name="Zabinski T."/>
            <person name="Pan C."/>
            <person name="Scott K.M."/>
        </authorList>
    </citation>
    <scope>SUBCELLULAR LOCATION</scope>
    <scope>INDUCTION</scope>
    <source>
        <strain>DSM 25203 / XCL-2</strain>
    </source>
</reference>
<dbReference type="EMBL" id="CP000109">
    <property type="protein sequence ID" value="ABB41442.1"/>
    <property type="molecule type" value="Genomic_DNA"/>
</dbReference>
<dbReference type="SMR" id="Q31HD1"/>
<dbReference type="STRING" id="317025.Tcr_0846"/>
<dbReference type="KEGG" id="tcx:Tcr_0846"/>
<dbReference type="eggNOG" id="COG4577">
    <property type="taxonomic scope" value="Bacteria"/>
</dbReference>
<dbReference type="HOGENOM" id="CLU_064903_5_3_6"/>
<dbReference type="OrthoDB" id="9812608at2"/>
<dbReference type="GO" id="GO:0031470">
    <property type="term" value="C:carboxysome"/>
    <property type="evidence" value="ECO:0007669"/>
    <property type="project" value="UniProtKB-SubCell"/>
</dbReference>
<dbReference type="GO" id="GO:0015977">
    <property type="term" value="P:carbon fixation"/>
    <property type="evidence" value="ECO:0007669"/>
    <property type="project" value="UniProtKB-KW"/>
</dbReference>
<dbReference type="CDD" id="cd07058">
    <property type="entry name" value="BMC_CsoS1"/>
    <property type="match status" value="1"/>
</dbReference>
<dbReference type="Gene3D" id="3.30.70.1710">
    <property type="match status" value="1"/>
</dbReference>
<dbReference type="InterPro" id="IPR020808">
    <property type="entry name" value="Bact_microcomp_CS"/>
</dbReference>
<dbReference type="InterPro" id="IPR000249">
    <property type="entry name" value="BMC_dom"/>
</dbReference>
<dbReference type="InterPro" id="IPR050575">
    <property type="entry name" value="BMC_shell"/>
</dbReference>
<dbReference type="InterPro" id="IPR037233">
    <property type="entry name" value="CcmK-like_sf"/>
</dbReference>
<dbReference type="InterPro" id="IPR044872">
    <property type="entry name" value="CcmK/CsoS1_BMC"/>
</dbReference>
<dbReference type="PANTHER" id="PTHR33941:SF11">
    <property type="entry name" value="BACTERIAL MICROCOMPARTMENT SHELL PROTEIN PDUJ"/>
    <property type="match status" value="1"/>
</dbReference>
<dbReference type="PANTHER" id="PTHR33941">
    <property type="entry name" value="PROPANEDIOL UTILIZATION PROTEIN PDUA"/>
    <property type="match status" value="1"/>
</dbReference>
<dbReference type="Pfam" id="PF00936">
    <property type="entry name" value="BMC"/>
    <property type="match status" value="1"/>
</dbReference>
<dbReference type="SMART" id="SM00877">
    <property type="entry name" value="BMC"/>
    <property type="match status" value="1"/>
</dbReference>
<dbReference type="SUPFAM" id="SSF143414">
    <property type="entry name" value="CcmK-like"/>
    <property type="match status" value="1"/>
</dbReference>
<dbReference type="PROSITE" id="PS01139">
    <property type="entry name" value="BMC_1"/>
    <property type="match status" value="1"/>
</dbReference>
<dbReference type="PROSITE" id="PS51930">
    <property type="entry name" value="BMC_2"/>
    <property type="match status" value="1"/>
</dbReference>
<proteinExistence type="evidence at protein level"/>
<evidence type="ECO:0000250" key="1">
    <source>
        <dbReference type="UniProtKB" id="P45689"/>
    </source>
</evidence>
<evidence type="ECO:0000255" key="2">
    <source>
        <dbReference type="PROSITE-ProRule" id="PRU01278"/>
    </source>
</evidence>
<evidence type="ECO:0000269" key="3">
    <source>
    </source>
</evidence>
<evidence type="ECO:0000303" key="4">
    <source>
    </source>
</evidence>
<evidence type="ECO:0000305" key="5"/>
<evidence type="ECO:0000305" key="6">
    <source>
    </source>
</evidence>
<accession>Q31HD1</accession>
<name>CSOSC_HYDCU</name>